<name>GRPE_CUPPJ</name>
<dbReference type="EMBL" id="CP000090">
    <property type="protein sequence ID" value="AAZ60419.1"/>
    <property type="molecule type" value="Genomic_DNA"/>
</dbReference>
<dbReference type="SMR" id="Q473L4"/>
<dbReference type="STRING" id="264198.Reut_A1040"/>
<dbReference type="KEGG" id="reu:Reut_A1040"/>
<dbReference type="eggNOG" id="COG0576">
    <property type="taxonomic scope" value="Bacteria"/>
</dbReference>
<dbReference type="HOGENOM" id="CLU_057217_6_1_4"/>
<dbReference type="OrthoDB" id="9789811at2"/>
<dbReference type="GO" id="GO:0005829">
    <property type="term" value="C:cytosol"/>
    <property type="evidence" value="ECO:0007669"/>
    <property type="project" value="TreeGrafter"/>
</dbReference>
<dbReference type="GO" id="GO:0000774">
    <property type="term" value="F:adenyl-nucleotide exchange factor activity"/>
    <property type="evidence" value="ECO:0007669"/>
    <property type="project" value="InterPro"/>
</dbReference>
<dbReference type="GO" id="GO:0042803">
    <property type="term" value="F:protein homodimerization activity"/>
    <property type="evidence" value="ECO:0007669"/>
    <property type="project" value="InterPro"/>
</dbReference>
<dbReference type="GO" id="GO:0051087">
    <property type="term" value="F:protein-folding chaperone binding"/>
    <property type="evidence" value="ECO:0007669"/>
    <property type="project" value="InterPro"/>
</dbReference>
<dbReference type="GO" id="GO:0051082">
    <property type="term" value="F:unfolded protein binding"/>
    <property type="evidence" value="ECO:0007669"/>
    <property type="project" value="TreeGrafter"/>
</dbReference>
<dbReference type="GO" id="GO:0006457">
    <property type="term" value="P:protein folding"/>
    <property type="evidence" value="ECO:0007669"/>
    <property type="project" value="InterPro"/>
</dbReference>
<dbReference type="CDD" id="cd00446">
    <property type="entry name" value="GrpE"/>
    <property type="match status" value="1"/>
</dbReference>
<dbReference type="FunFam" id="2.30.22.10:FF:000001">
    <property type="entry name" value="Protein GrpE"/>
    <property type="match status" value="1"/>
</dbReference>
<dbReference type="Gene3D" id="3.90.20.20">
    <property type="match status" value="1"/>
</dbReference>
<dbReference type="Gene3D" id="2.30.22.10">
    <property type="entry name" value="Head domain of nucleotide exchange factor GrpE"/>
    <property type="match status" value="1"/>
</dbReference>
<dbReference type="HAMAP" id="MF_01151">
    <property type="entry name" value="GrpE"/>
    <property type="match status" value="1"/>
</dbReference>
<dbReference type="InterPro" id="IPR000740">
    <property type="entry name" value="GrpE"/>
</dbReference>
<dbReference type="InterPro" id="IPR013805">
    <property type="entry name" value="GrpE_coiled_coil"/>
</dbReference>
<dbReference type="InterPro" id="IPR009012">
    <property type="entry name" value="GrpE_head"/>
</dbReference>
<dbReference type="NCBIfam" id="NF010737">
    <property type="entry name" value="PRK14139.1"/>
    <property type="match status" value="1"/>
</dbReference>
<dbReference type="NCBIfam" id="NF010738">
    <property type="entry name" value="PRK14140.1"/>
    <property type="match status" value="1"/>
</dbReference>
<dbReference type="NCBIfam" id="NF010748">
    <property type="entry name" value="PRK14150.1"/>
    <property type="match status" value="1"/>
</dbReference>
<dbReference type="PANTHER" id="PTHR21237">
    <property type="entry name" value="GRPE PROTEIN"/>
    <property type="match status" value="1"/>
</dbReference>
<dbReference type="PANTHER" id="PTHR21237:SF23">
    <property type="entry name" value="GRPE PROTEIN HOMOLOG, MITOCHONDRIAL"/>
    <property type="match status" value="1"/>
</dbReference>
<dbReference type="Pfam" id="PF01025">
    <property type="entry name" value="GrpE"/>
    <property type="match status" value="1"/>
</dbReference>
<dbReference type="PRINTS" id="PR00773">
    <property type="entry name" value="GRPEPROTEIN"/>
</dbReference>
<dbReference type="SUPFAM" id="SSF58014">
    <property type="entry name" value="Coiled-coil domain of nucleotide exchange factor GrpE"/>
    <property type="match status" value="1"/>
</dbReference>
<dbReference type="SUPFAM" id="SSF51064">
    <property type="entry name" value="Head domain of nucleotide exchange factor GrpE"/>
    <property type="match status" value="1"/>
</dbReference>
<dbReference type="PROSITE" id="PS01071">
    <property type="entry name" value="GRPE"/>
    <property type="match status" value="1"/>
</dbReference>
<feature type="chain" id="PRO_1000137599" description="Protein GrpE">
    <location>
        <begin position="1"/>
        <end position="184"/>
    </location>
</feature>
<feature type="region of interest" description="Disordered" evidence="2">
    <location>
        <begin position="1"/>
        <end position="32"/>
    </location>
</feature>
<feature type="compositionally biased region" description="Low complexity" evidence="2">
    <location>
        <begin position="12"/>
        <end position="32"/>
    </location>
</feature>
<protein>
    <recommendedName>
        <fullName evidence="1">Protein GrpE</fullName>
    </recommendedName>
    <alternativeName>
        <fullName evidence="1">HSP-70 cofactor</fullName>
    </alternativeName>
</protein>
<reference key="1">
    <citation type="journal article" date="2010" name="PLoS ONE">
        <title>The complete multipartite genome sequence of Cupriavidus necator JMP134, a versatile pollutant degrader.</title>
        <authorList>
            <person name="Lykidis A."/>
            <person name="Perez-Pantoja D."/>
            <person name="Ledger T."/>
            <person name="Mavromatis K."/>
            <person name="Anderson I.J."/>
            <person name="Ivanova N.N."/>
            <person name="Hooper S.D."/>
            <person name="Lapidus A."/>
            <person name="Lucas S."/>
            <person name="Gonzalez B."/>
            <person name="Kyrpides N.C."/>
        </authorList>
    </citation>
    <scope>NUCLEOTIDE SEQUENCE [LARGE SCALE GENOMIC DNA]</scope>
    <source>
        <strain>JMP134 / LMG 1197</strain>
    </source>
</reference>
<comment type="function">
    <text evidence="1">Participates actively in the response to hyperosmotic and heat shock by preventing the aggregation of stress-denatured proteins, in association with DnaK and GrpE. It is the nucleotide exchange factor for DnaK and may function as a thermosensor. Unfolded proteins bind initially to DnaJ; upon interaction with the DnaJ-bound protein, DnaK hydrolyzes its bound ATP, resulting in the formation of a stable complex. GrpE releases ADP from DnaK; ATP binding to DnaK triggers the release of the substrate protein, thus completing the reaction cycle. Several rounds of ATP-dependent interactions between DnaJ, DnaK and GrpE are required for fully efficient folding.</text>
</comment>
<comment type="subunit">
    <text evidence="1">Homodimer.</text>
</comment>
<comment type="subcellular location">
    <subcellularLocation>
        <location evidence="1">Cytoplasm</location>
    </subcellularLocation>
</comment>
<comment type="similarity">
    <text evidence="1">Belongs to the GrpE family.</text>
</comment>
<organism>
    <name type="scientific">Cupriavidus pinatubonensis (strain JMP 134 / LMG 1197)</name>
    <name type="common">Cupriavidus necator (strain JMP 134)</name>
    <dbReference type="NCBI Taxonomy" id="264198"/>
    <lineage>
        <taxon>Bacteria</taxon>
        <taxon>Pseudomonadati</taxon>
        <taxon>Pseudomonadota</taxon>
        <taxon>Betaproteobacteria</taxon>
        <taxon>Burkholderiales</taxon>
        <taxon>Burkholderiaceae</taxon>
        <taxon>Cupriavidus</taxon>
    </lineage>
</organism>
<proteinExistence type="inferred from homology"/>
<accession>Q473L4</accession>
<sequence>MEEQKQTPSTPTPDTAAEAAVNAATAAPETAGADDVAAQLAALEAKAREHYDMYVRAVAEGENIRRRAQEDVSKAHKFAIENFADNLLPVMDSLQAALADGSGDIAKLREGVELTARQLSAAFERGKIVELNPVGEKFDPHRHQAISMVPSEQESNTVVTVLQRGYTIADRVLRPALVTVSAPK</sequence>
<gene>
    <name evidence="1" type="primary">grpE</name>
    <name type="ordered locus">Reut_A1040</name>
</gene>
<evidence type="ECO:0000255" key="1">
    <source>
        <dbReference type="HAMAP-Rule" id="MF_01151"/>
    </source>
</evidence>
<evidence type="ECO:0000256" key="2">
    <source>
        <dbReference type="SAM" id="MobiDB-lite"/>
    </source>
</evidence>
<keyword id="KW-0143">Chaperone</keyword>
<keyword id="KW-0963">Cytoplasm</keyword>
<keyword id="KW-0346">Stress response</keyword>